<organism>
    <name type="scientific">Oryza sativa subsp. japonica</name>
    <name type="common">Rice</name>
    <dbReference type="NCBI Taxonomy" id="39947"/>
    <lineage>
        <taxon>Eukaryota</taxon>
        <taxon>Viridiplantae</taxon>
        <taxon>Streptophyta</taxon>
        <taxon>Embryophyta</taxon>
        <taxon>Tracheophyta</taxon>
        <taxon>Spermatophyta</taxon>
        <taxon>Magnoliopsida</taxon>
        <taxon>Liliopsida</taxon>
        <taxon>Poales</taxon>
        <taxon>Poaceae</taxon>
        <taxon>BOP clade</taxon>
        <taxon>Oryzoideae</taxon>
        <taxon>Oryzeae</taxon>
        <taxon>Oryzinae</taxon>
        <taxon>Oryza</taxon>
        <taxon>Oryza sativa</taxon>
    </lineage>
</organism>
<name>ISPG_ORYSJ</name>
<evidence type="ECO:0000250" key="1"/>
<evidence type="ECO:0000255" key="2"/>
<evidence type="ECO:0000305" key="3"/>
<dbReference type="EC" id="1.17.7.1"/>
<dbReference type="EMBL" id="AP004124">
    <property type="protein sequence ID" value="BAD19354.1"/>
    <property type="molecule type" value="Genomic_DNA"/>
</dbReference>
<dbReference type="EMBL" id="AP008208">
    <property type="protein sequence ID" value="BAF09279.1"/>
    <property type="molecule type" value="Genomic_DNA"/>
</dbReference>
<dbReference type="EMBL" id="AP014958">
    <property type="protein sequence ID" value="BAS79642.1"/>
    <property type="molecule type" value="Genomic_DNA"/>
</dbReference>
<dbReference type="EMBL" id="CM000139">
    <property type="protein sequence ID" value="EEE57327.1"/>
    <property type="molecule type" value="Genomic_DNA"/>
</dbReference>
<dbReference type="EMBL" id="AK120769">
    <property type="protein sequence ID" value="BAH00163.1"/>
    <property type="molecule type" value="mRNA"/>
</dbReference>
<dbReference type="EMBL" id="AY224457">
    <property type="protein sequence ID" value="AAO72576.1"/>
    <property type="molecule type" value="mRNA"/>
</dbReference>
<dbReference type="RefSeq" id="XP_015625724.1">
    <property type="nucleotide sequence ID" value="XM_015770238.1"/>
</dbReference>
<dbReference type="SMR" id="Q6K8J4"/>
<dbReference type="FunCoup" id="Q6K8J4">
    <property type="interactions" value="1216"/>
</dbReference>
<dbReference type="IntAct" id="Q6K8J4">
    <property type="interactions" value="1"/>
</dbReference>
<dbReference type="STRING" id="39947.Q6K8J4"/>
<dbReference type="PaxDb" id="39947-Q6K8J4"/>
<dbReference type="EnsemblPlants" id="Os02t0603800-01">
    <property type="protein sequence ID" value="Os02t0603800-01"/>
    <property type="gene ID" value="Os02g0603800"/>
</dbReference>
<dbReference type="Gramene" id="Os02t0603800-01">
    <property type="protein sequence ID" value="Os02t0603800-01"/>
    <property type="gene ID" value="Os02g0603800"/>
</dbReference>
<dbReference type="KEGG" id="dosa:Os02g0603800"/>
<dbReference type="eggNOG" id="ENOG502QSBY">
    <property type="taxonomic scope" value="Eukaryota"/>
</dbReference>
<dbReference type="HOGENOM" id="CLU_012689_0_0_1"/>
<dbReference type="InParanoid" id="Q6K8J4"/>
<dbReference type="OMA" id="LYVGKEC"/>
<dbReference type="OrthoDB" id="429167at2759"/>
<dbReference type="PlantReactome" id="R-OSA-1119464">
    <property type="pathway name" value="Methylerythritol phosphate pathway"/>
</dbReference>
<dbReference type="UniPathway" id="UPA00056">
    <property type="reaction ID" value="UER00096"/>
</dbReference>
<dbReference type="Proteomes" id="UP000000763">
    <property type="component" value="Chromosome 2"/>
</dbReference>
<dbReference type="Proteomes" id="UP000007752">
    <property type="component" value="Chromosome 2"/>
</dbReference>
<dbReference type="Proteomes" id="UP000059680">
    <property type="component" value="Chromosome 2"/>
</dbReference>
<dbReference type="GO" id="GO:0009507">
    <property type="term" value="C:chloroplast"/>
    <property type="evidence" value="ECO:0000318"/>
    <property type="project" value="GO_Central"/>
</dbReference>
<dbReference type="GO" id="GO:0009570">
    <property type="term" value="C:chloroplast stroma"/>
    <property type="evidence" value="ECO:0007669"/>
    <property type="project" value="UniProtKB-SubCell"/>
</dbReference>
<dbReference type="GO" id="GO:0051539">
    <property type="term" value="F:4 iron, 4 sulfur cluster binding"/>
    <property type="evidence" value="ECO:0007669"/>
    <property type="project" value="UniProtKB-KW"/>
</dbReference>
<dbReference type="GO" id="GO:0046429">
    <property type="term" value="F:4-hydroxy-3-methylbut-2-en-1-yl diphosphate synthase activity (ferredoxin)"/>
    <property type="evidence" value="ECO:0000318"/>
    <property type="project" value="GO_Central"/>
</dbReference>
<dbReference type="GO" id="GO:0005506">
    <property type="term" value="F:iron ion binding"/>
    <property type="evidence" value="ECO:0007669"/>
    <property type="project" value="InterPro"/>
</dbReference>
<dbReference type="GO" id="GO:0019288">
    <property type="term" value="P:isopentenyl diphosphate biosynthetic process, methylerythritol 4-phosphate pathway"/>
    <property type="evidence" value="ECO:0000318"/>
    <property type="project" value="GO_Central"/>
</dbReference>
<dbReference type="GO" id="GO:0009617">
    <property type="term" value="P:response to bacterium"/>
    <property type="evidence" value="ECO:0007669"/>
    <property type="project" value="EnsemblPlants"/>
</dbReference>
<dbReference type="GO" id="GO:0009862">
    <property type="term" value="P:systemic acquired resistance, salicylic acid mediated signaling pathway"/>
    <property type="evidence" value="ECO:0007669"/>
    <property type="project" value="EnsemblPlants"/>
</dbReference>
<dbReference type="GO" id="GO:0016114">
    <property type="term" value="P:terpenoid biosynthetic process"/>
    <property type="evidence" value="ECO:0007669"/>
    <property type="project" value="InterPro"/>
</dbReference>
<dbReference type="FunFam" id="3.20.20.20:FF:000005">
    <property type="entry name" value="4-hydroxy-3-methylbut-2-en-1-yl diphosphate synthase (flavodoxin)"/>
    <property type="match status" value="1"/>
</dbReference>
<dbReference type="FunFam" id="3.30.413.10:FF:000006">
    <property type="entry name" value="4-hydroxy-3-methylbut-2-en-1-yl diphosphate synthase (flavodoxin)"/>
    <property type="match status" value="1"/>
</dbReference>
<dbReference type="Gene3D" id="3.20.20.20">
    <property type="entry name" value="Dihydropteroate synthase-like"/>
    <property type="match status" value="1"/>
</dbReference>
<dbReference type="Gene3D" id="3.30.413.10">
    <property type="entry name" value="Sulfite Reductase Hemoprotein, domain 1"/>
    <property type="match status" value="1"/>
</dbReference>
<dbReference type="HAMAP" id="MF_00159">
    <property type="entry name" value="IspG"/>
    <property type="match status" value="1"/>
</dbReference>
<dbReference type="InterPro" id="IPR011005">
    <property type="entry name" value="Dihydropteroate_synth-like_sf"/>
</dbReference>
<dbReference type="InterPro" id="IPR017178">
    <property type="entry name" value="IspG_atypical"/>
</dbReference>
<dbReference type="InterPro" id="IPR004588">
    <property type="entry name" value="IspG_bac-typ"/>
</dbReference>
<dbReference type="InterPro" id="IPR045854">
    <property type="entry name" value="NO2/SO3_Rdtase_4Fe4S_sf"/>
</dbReference>
<dbReference type="NCBIfam" id="TIGR00612">
    <property type="entry name" value="ispG_gcpE"/>
    <property type="match status" value="1"/>
</dbReference>
<dbReference type="PANTHER" id="PTHR30454">
    <property type="entry name" value="4-HYDROXY-3-METHYLBUT-2-EN-1-YL DIPHOSPHATE SYNTHASE"/>
    <property type="match status" value="1"/>
</dbReference>
<dbReference type="PANTHER" id="PTHR30454:SF0">
    <property type="entry name" value="4-HYDROXY-3-METHYLBUT-2-EN-1-YL DIPHOSPHATE SYNTHASE (FERREDOXIN), CHLOROPLASTIC"/>
    <property type="match status" value="1"/>
</dbReference>
<dbReference type="Pfam" id="PF04551">
    <property type="entry name" value="GcpE"/>
    <property type="match status" value="2"/>
</dbReference>
<dbReference type="PIRSF" id="PIRSF037336">
    <property type="entry name" value="IspG_like"/>
    <property type="match status" value="1"/>
</dbReference>
<dbReference type="SUPFAM" id="SSF56014">
    <property type="entry name" value="Nitrite and sulphite reductase 4Fe-4S domain-like"/>
    <property type="match status" value="1"/>
</dbReference>
<protein>
    <recommendedName>
        <fullName>4-hydroxy-3-methylbut-2-en-1-yl diphosphate synthase (ferredoxin), chloroplastic</fullName>
        <ecNumber>1.17.7.1</ecNumber>
    </recommendedName>
    <alternativeName>
        <fullName>1-hydroxy-2-methyl-2-(E)-butenyl 4-diphosphate synthase</fullName>
    </alternativeName>
</protein>
<sequence length="744" mass="82161">MATGVAPAPLPHVRVRDGGIGFTRSVDFAKILSVPATLRVGSSRGRVLVAKSSSTGSDTMELEPSSEGSPLLVPRQKYCESIYETRRRKTRTVMVGNVPLGSDHPIRIQTMTTSDTKDVAKTVEEVMRIADKGADFVRITVQGRKEADACFEIKNTLVQKNYNIPLVADIHFAPTVALRVAECFDKIRVNPGNFADRRAQFEQLEYTEDDYQKELEHIEKVFSPLVEKCKQYGRAMRIGTNHGSLSDRIMSYYGDSPRGMVESALEFARICRKLDFHNFVFSMKASNPVIMVQAYRLLVAEMYNLGWDYPLHLGVTEAGEGEDGRMKSAIGIGTLLMDGLGDTIRVSLTEPPEEEIDPCRRLANLGTHAADLQIGVAPFEEKHRRYFDFQRRSGQLPLQKEGEEVDYRGVLHRDGSVLMSVSLDQLKAPELLYRSLAAKLVVGMPFKDLATVDSILLRELPPVEDAQARLALKRLVDISMGVLTPLSEQLTKPLPHAIALVNVDELSSGAHKLLPEGTRLAVTLRGDESYEQLDLLKGVDDITMLLHSVPYGEEKTGRVHAARRLFEYLETNGLNFPVIHHIEFPKSVNRDDLVIGAGANVGALLVDGLGDGVLLEAADQEFEFLRDTSFNLLQGCRMRNTKTEYVSCPSCGRTLFDLQEVSAQIREKTSHLPGVSIAIMGCIVNGPGEMADADFGYVGGAPGKIDLYVGKTVVQRGIAMEGATDALIQLIKDHGRWVDPPVEE</sequence>
<feature type="transit peptide" description="Chloroplast" evidence="2">
    <location>
        <begin position="1"/>
        <end position="39"/>
    </location>
</feature>
<feature type="chain" id="PRO_0000417591" description="4-hydroxy-3-methylbut-2-en-1-yl diphosphate synthase (ferredoxin), chloroplastic">
    <location>
        <begin position="40"/>
        <end position="744"/>
    </location>
</feature>
<feature type="binding site" evidence="1">
    <location>
        <position position="648"/>
    </location>
    <ligand>
        <name>[4Fe-4S] cluster</name>
        <dbReference type="ChEBI" id="CHEBI:49883"/>
    </ligand>
</feature>
<feature type="binding site" evidence="1">
    <location>
        <position position="651"/>
    </location>
    <ligand>
        <name>[4Fe-4S] cluster</name>
        <dbReference type="ChEBI" id="CHEBI:49883"/>
    </ligand>
</feature>
<feature type="binding site" evidence="1">
    <location>
        <position position="682"/>
    </location>
    <ligand>
        <name>[4Fe-4S] cluster</name>
        <dbReference type="ChEBI" id="CHEBI:49883"/>
    </ligand>
</feature>
<feature type="binding site" evidence="1">
    <location>
        <position position="689"/>
    </location>
    <ligand>
        <name>[4Fe-4S] cluster</name>
        <dbReference type="ChEBI" id="CHEBI:49883"/>
    </ligand>
</feature>
<reference key="1">
    <citation type="journal article" date="2005" name="Nature">
        <title>The map-based sequence of the rice genome.</title>
        <authorList>
            <consortium name="International rice genome sequencing project (IRGSP)"/>
        </authorList>
    </citation>
    <scope>NUCLEOTIDE SEQUENCE [LARGE SCALE GENOMIC DNA]</scope>
    <source>
        <strain>cv. Nipponbare</strain>
    </source>
</reference>
<reference key="2">
    <citation type="journal article" date="2008" name="Nucleic Acids Res.">
        <title>The rice annotation project database (RAP-DB): 2008 update.</title>
        <authorList>
            <consortium name="The rice annotation project (RAP)"/>
        </authorList>
    </citation>
    <scope>GENOME REANNOTATION</scope>
    <source>
        <strain>cv. Nipponbare</strain>
    </source>
</reference>
<reference key="3">
    <citation type="journal article" date="2013" name="Rice">
        <title>Improvement of the Oryza sativa Nipponbare reference genome using next generation sequence and optical map data.</title>
        <authorList>
            <person name="Kawahara Y."/>
            <person name="de la Bastide M."/>
            <person name="Hamilton J.P."/>
            <person name="Kanamori H."/>
            <person name="McCombie W.R."/>
            <person name="Ouyang S."/>
            <person name="Schwartz D.C."/>
            <person name="Tanaka T."/>
            <person name="Wu J."/>
            <person name="Zhou S."/>
            <person name="Childs K.L."/>
            <person name="Davidson R.M."/>
            <person name="Lin H."/>
            <person name="Quesada-Ocampo L."/>
            <person name="Vaillancourt B."/>
            <person name="Sakai H."/>
            <person name="Lee S.S."/>
            <person name="Kim J."/>
            <person name="Numa H."/>
            <person name="Itoh T."/>
            <person name="Buell C.R."/>
            <person name="Matsumoto T."/>
        </authorList>
    </citation>
    <scope>GENOME REANNOTATION</scope>
    <source>
        <strain>cv. Nipponbare</strain>
    </source>
</reference>
<reference key="4">
    <citation type="journal article" date="2005" name="PLoS Biol.">
        <title>The genomes of Oryza sativa: a history of duplications.</title>
        <authorList>
            <person name="Yu J."/>
            <person name="Wang J."/>
            <person name="Lin W."/>
            <person name="Li S."/>
            <person name="Li H."/>
            <person name="Zhou J."/>
            <person name="Ni P."/>
            <person name="Dong W."/>
            <person name="Hu S."/>
            <person name="Zeng C."/>
            <person name="Zhang J."/>
            <person name="Zhang Y."/>
            <person name="Li R."/>
            <person name="Xu Z."/>
            <person name="Li S."/>
            <person name="Li X."/>
            <person name="Zheng H."/>
            <person name="Cong L."/>
            <person name="Lin L."/>
            <person name="Yin J."/>
            <person name="Geng J."/>
            <person name="Li G."/>
            <person name="Shi J."/>
            <person name="Liu J."/>
            <person name="Lv H."/>
            <person name="Li J."/>
            <person name="Wang J."/>
            <person name="Deng Y."/>
            <person name="Ran L."/>
            <person name="Shi X."/>
            <person name="Wang X."/>
            <person name="Wu Q."/>
            <person name="Li C."/>
            <person name="Ren X."/>
            <person name="Wang J."/>
            <person name="Wang X."/>
            <person name="Li D."/>
            <person name="Liu D."/>
            <person name="Zhang X."/>
            <person name="Ji Z."/>
            <person name="Zhao W."/>
            <person name="Sun Y."/>
            <person name="Zhang Z."/>
            <person name="Bao J."/>
            <person name="Han Y."/>
            <person name="Dong L."/>
            <person name="Ji J."/>
            <person name="Chen P."/>
            <person name="Wu S."/>
            <person name="Liu J."/>
            <person name="Xiao Y."/>
            <person name="Bu D."/>
            <person name="Tan J."/>
            <person name="Yang L."/>
            <person name="Ye C."/>
            <person name="Zhang J."/>
            <person name="Xu J."/>
            <person name="Zhou Y."/>
            <person name="Yu Y."/>
            <person name="Zhang B."/>
            <person name="Zhuang S."/>
            <person name="Wei H."/>
            <person name="Liu B."/>
            <person name="Lei M."/>
            <person name="Yu H."/>
            <person name="Li Y."/>
            <person name="Xu H."/>
            <person name="Wei S."/>
            <person name="He X."/>
            <person name="Fang L."/>
            <person name="Zhang Z."/>
            <person name="Zhang Y."/>
            <person name="Huang X."/>
            <person name="Su Z."/>
            <person name="Tong W."/>
            <person name="Li J."/>
            <person name="Tong Z."/>
            <person name="Li S."/>
            <person name="Ye J."/>
            <person name="Wang L."/>
            <person name="Fang L."/>
            <person name="Lei T."/>
            <person name="Chen C.-S."/>
            <person name="Chen H.-C."/>
            <person name="Xu Z."/>
            <person name="Li H."/>
            <person name="Huang H."/>
            <person name="Zhang F."/>
            <person name="Xu H."/>
            <person name="Li N."/>
            <person name="Zhao C."/>
            <person name="Li S."/>
            <person name="Dong L."/>
            <person name="Huang Y."/>
            <person name="Li L."/>
            <person name="Xi Y."/>
            <person name="Qi Q."/>
            <person name="Li W."/>
            <person name="Zhang B."/>
            <person name="Hu W."/>
            <person name="Zhang Y."/>
            <person name="Tian X."/>
            <person name="Jiao Y."/>
            <person name="Liang X."/>
            <person name="Jin J."/>
            <person name="Gao L."/>
            <person name="Zheng W."/>
            <person name="Hao B."/>
            <person name="Liu S.-M."/>
            <person name="Wang W."/>
            <person name="Yuan L."/>
            <person name="Cao M."/>
            <person name="McDermott J."/>
            <person name="Samudrala R."/>
            <person name="Wang J."/>
            <person name="Wong G.K.-S."/>
            <person name="Yang H."/>
        </authorList>
    </citation>
    <scope>NUCLEOTIDE SEQUENCE [LARGE SCALE GENOMIC DNA]</scope>
    <source>
        <strain>cv. Nipponbare</strain>
    </source>
</reference>
<reference key="5">
    <citation type="journal article" date="2003" name="Science">
        <title>Collection, mapping, and annotation of over 28,000 cDNA clones from japonica rice.</title>
        <authorList>
            <consortium name="The rice full-length cDNA consortium"/>
        </authorList>
    </citation>
    <scope>NUCLEOTIDE SEQUENCE [LARGE SCALE MRNA]</scope>
    <source>
        <strain>cv. Nipponbare</strain>
    </source>
</reference>
<reference key="6">
    <citation type="journal article" date="2003" name="Proc. Natl. Acad. Sci. U.S.A.">
        <title>A network of rice genes associated with stress response and seed development.</title>
        <authorList>
            <person name="Cooper B."/>
            <person name="Clarke J.D."/>
            <person name="Budworth P."/>
            <person name="Kreps J."/>
            <person name="Hutchison D."/>
            <person name="Park S."/>
            <person name="Guimil S."/>
            <person name="Dunn M."/>
            <person name="Luginbuehl P."/>
            <person name="Ellero C."/>
            <person name="Goff S.A."/>
            <person name="Glazebrook J."/>
        </authorList>
    </citation>
    <scope>NUCLEOTIDE SEQUENCE [MRNA] OF 137-744</scope>
</reference>
<accession>Q6K8J4</accession>
<accession>A0A0P0VLD4</accession>
<accession>Q84PA7</accession>
<proteinExistence type="evidence at transcript level"/>
<keyword id="KW-0004">4Fe-4S</keyword>
<keyword id="KW-0150">Chloroplast</keyword>
<keyword id="KW-0408">Iron</keyword>
<keyword id="KW-0411">Iron-sulfur</keyword>
<keyword id="KW-0414">Isoprene biosynthesis</keyword>
<keyword id="KW-0479">Metal-binding</keyword>
<keyword id="KW-0560">Oxidoreductase</keyword>
<keyword id="KW-0934">Plastid</keyword>
<keyword id="KW-1185">Reference proteome</keyword>
<keyword id="KW-0809">Transit peptide</keyword>
<comment type="function">
    <text evidence="1">Enzyme of the plastid non-mevalonate pathway for isoprenoid biosynthesis that converts 2-C-methyl-D-erythritol 2,4-cyclodiphosphate (ME-2,4cPP) into 1-hydroxy-2-methyl-2-(E)-butenyl 4-diphosphate. Is essential for chloroplast development (By similarity).</text>
</comment>
<comment type="catalytic activity">
    <reaction>
        <text>(2E)-4-hydroxy-3-methylbut-2-enyl diphosphate + 2 oxidized [2Fe-2S]-[ferredoxin] + H2O = 2-C-methyl-D-erythritol 2,4-cyclic diphosphate + 2 reduced [2Fe-2S]-[ferredoxin] + H(+)</text>
        <dbReference type="Rhea" id="RHEA:26119"/>
        <dbReference type="Rhea" id="RHEA-COMP:10000"/>
        <dbReference type="Rhea" id="RHEA-COMP:10001"/>
        <dbReference type="ChEBI" id="CHEBI:15377"/>
        <dbReference type="ChEBI" id="CHEBI:15378"/>
        <dbReference type="ChEBI" id="CHEBI:33737"/>
        <dbReference type="ChEBI" id="CHEBI:33738"/>
        <dbReference type="ChEBI" id="CHEBI:58483"/>
        <dbReference type="ChEBI" id="CHEBI:128753"/>
        <dbReference type="EC" id="1.17.7.1"/>
    </reaction>
</comment>
<comment type="cofactor">
    <cofactor evidence="1">
        <name>[4Fe-4S] cluster</name>
        <dbReference type="ChEBI" id="CHEBI:49883"/>
    </cofactor>
    <text evidence="1">Binds 1 [4Fe-4S] cluster per subunit.</text>
</comment>
<comment type="pathway">
    <text>Isoprenoid biosynthesis; isopentenyl diphosphate biosynthesis via DXP pathway; isopentenyl diphosphate from 1-deoxy-D-xylulose 5-phosphate: step 5/6.</text>
</comment>
<comment type="subunit">
    <text evidence="1">Homodimer.</text>
</comment>
<comment type="subcellular location">
    <subcellularLocation>
        <location evidence="1">Plastid</location>
        <location evidence="1">Chloroplast stroma</location>
    </subcellularLocation>
</comment>
<comment type="similarity">
    <text evidence="3">Belongs to the IspG family.</text>
</comment>
<gene>
    <name type="primary">ISPG</name>
    <name type="ordered locus">Os02g0603800</name>
    <name type="ordered locus">LOC_Os02g39160</name>
    <name type="ORF">OJ1669_F01.30</name>
    <name type="ORF">OsJ_07430</name>
</gene>